<keyword id="KW-0326">Glycosidase</keyword>
<keyword id="KW-0378">Hydrolase</keyword>
<keyword id="KW-0460">Magnesium</keyword>
<keyword id="KW-0479">Metal-binding</keyword>
<keyword id="KW-1185">Reference proteome</keyword>
<keyword id="KW-0915">Sodium</keyword>
<evidence type="ECO:0000255" key="1">
    <source>
        <dbReference type="HAMAP-Rule" id="MF_01687"/>
    </source>
</evidence>
<accession>B7UJI9</accession>
<gene>
    <name evidence="1" type="primary">lacZ</name>
    <name type="ordered locus">E2348C_0299</name>
</gene>
<sequence>MTMITDSLAVVLQRRDWENPGVTQLNRLAAHPPFASWRNSEEARTDRPSQQLRSLNGEWQFVWFPAPEAVPESWLECDLPDADTVVVPSNWQMHGYDAPIYTNVTYPITVNPPFVPAENPTGCYSLTFNIDECWLQEGQTRIIFDGVNSAFHLWCNGRWVGYGQDSRLPSEFDLSAFLRAGKNRLAVMVLRWSDGSYLEDQDMWRMSGIFRDVSLLHKPTTQISDFHVATRFNDDFSRAVLEAEVQMYGELRDELRVTVSLWQGETQVASGTAPFGGEIIDERGGYADRVTLRLNVENPALWSAEIPNIYRAVVELHTADGTLIEAEACDVGFREVRIENGLLLLNGKPLLIRGVNRHEHHPLHGQVMDEQTMVQDILLMKQNNFNAVRCSHYPNHPLWYTLCDRYGLYVVDEANIETHGMVPMNRLTDDPRWLPAMSERVTRMVLRDRNHPSVIIWSLGNESGHGANHDALYRWIKSVDPSRPVQYEGGGADTTATDIICPMYARVDEDQPFPAVPKWSIKKWLSLPGELRPLILCEYAHAMGNSLGGFAKYWQAFRQYPRLQGGFVWDWVDQSLIKYDENGNPWSAYGGDFGDTPNDRQFCMNGLVFADRTPHPALTEAKHQQQFFQFRLSGRTIEVTSEYLFRHSDNELLHWTVALDGKPLASGEVPLDVAPQGKQVIELPELPQPESAGQLWLTVHVVQPNATAWSEAGHISAWQQWRLAENLSVTLPTASHAIPHLTTSEMDFCIELGNKRWQFNRQSGFLSQMWIGDEKQLLTPLRDQFTRAPLDNDIGVSEATRIDPNAWVERWKAAGHYQAEAALLQCTADTLADAVLITTAHAWQHQGKTLFISRKTYRIDGSGQMAITVDVEVASDTPHPARIGLTCQLAQVAERVNWLGLGPQENYPDRLTAACFDRWDLPLSDMYTPYVFPSENGLRCGTRELNYGPHQWRGDFQFNISRYSQQQLMETSHRHLLHAEEGTWLNIDGFHMGIGGDDSWSPSVSAEFQLSAGRYHYQLVWCQK</sequence>
<reference key="1">
    <citation type="journal article" date="2009" name="J. Bacteriol.">
        <title>Complete genome sequence and comparative genome analysis of enteropathogenic Escherichia coli O127:H6 strain E2348/69.</title>
        <authorList>
            <person name="Iguchi A."/>
            <person name="Thomson N.R."/>
            <person name="Ogura Y."/>
            <person name="Saunders D."/>
            <person name="Ooka T."/>
            <person name="Henderson I.R."/>
            <person name="Harris D."/>
            <person name="Asadulghani M."/>
            <person name="Kurokawa K."/>
            <person name="Dean P."/>
            <person name="Kenny B."/>
            <person name="Quail M.A."/>
            <person name="Thurston S."/>
            <person name="Dougan G."/>
            <person name="Hayashi T."/>
            <person name="Parkhill J."/>
            <person name="Frankel G."/>
        </authorList>
    </citation>
    <scope>NUCLEOTIDE SEQUENCE [LARGE SCALE GENOMIC DNA]</scope>
    <source>
        <strain>E2348/69 / EPEC</strain>
    </source>
</reference>
<organism>
    <name type="scientific">Escherichia coli O127:H6 (strain E2348/69 / EPEC)</name>
    <dbReference type="NCBI Taxonomy" id="574521"/>
    <lineage>
        <taxon>Bacteria</taxon>
        <taxon>Pseudomonadati</taxon>
        <taxon>Pseudomonadota</taxon>
        <taxon>Gammaproteobacteria</taxon>
        <taxon>Enterobacterales</taxon>
        <taxon>Enterobacteriaceae</taxon>
        <taxon>Escherichia</taxon>
    </lineage>
</organism>
<feature type="chain" id="PRO_1000215917" description="Beta-galactosidase">
    <location>
        <begin position="1"/>
        <end position="1024"/>
    </location>
</feature>
<feature type="active site" description="Proton donor" evidence="1">
    <location>
        <position position="462"/>
    </location>
</feature>
<feature type="active site" description="Nucleophile" evidence="1">
    <location>
        <position position="538"/>
    </location>
</feature>
<feature type="binding site" evidence="1">
    <location>
        <position position="103"/>
    </location>
    <ligand>
        <name>substrate</name>
    </ligand>
</feature>
<feature type="binding site" evidence="1">
    <location>
        <position position="202"/>
    </location>
    <ligand>
        <name>Na(+)</name>
        <dbReference type="ChEBI" id="CHEBI:29101"/>
    </ligand>
</feature>
<feature type="binding site" evidence="1">
    <location>
        <position position="202"/>
    </location>
    <ligand>
        <name>substrate</name>
    </ligand>
</feature>
<feature type="binding site" evidence="1">
    <location>
        <position position="417"/>
    </location>
    <ligand>
        <name>Mg(2+)</name>
        <dbReference type="ChEBI" id="CHEBI:18420"/>
        <label>1</label>
    </ligand>
</feature>
<feature type="binding site" evidence="1">
    <location>
        <position position="419"/>
    </location>
    <ligand>
        <name>Mg(2+)</name>
        <dbReference type="ChEBI" id="CHEBI:18420"/>
        <label>1</label>
    </ligand>
</feature>
<feature type="binding site" evidence="1">
    <location>
        <position position="462"/>
    </location>
    <ligand>
        <name>Mg(2+)</name>
        <dbReference type="ChEBI" id="CHEBI:18420"/>
        <label>1</label>
    </ligand>
</feature>
<feature type="binding site" evidence="1">
    <location>
        <position position="462"/>
    </location>
    <ligand>
        <name>substrate</name>
    </ligand>
</feature>
<feature type="binding site" evidence="1">
    <location>
        <begin position="538"/>
        <end position="541"/>
    </location>
    <ligand>
        <name>substrate</name>
    </ligand>
</feature>
<feature type="binding site" evidence="1">
    <location>
        <position position="598"/>
    </location>
    <ligand>
        <name>Mg(2+)</name>
        <dbReference type="ChEBI" id="CHEBI:18420"/>
        <label>2</label>
    </ligand>
</feature>
<feature type="binding site" evidence="1">
    <location>
        <position position="602"/>
    </location>
    <ligand>
        <name>Na(+)</name>
        <dbReference type="ChEBI" id="CHEBI:29101"/>
    </ligand>
</feature>
<feature type="binding site" evidence="1">
    <location>
        <position position="605"/>
    </location>
    <ligand>
        <name>Na(+)</name>
        <dbReference type="ChEBI" id="CHEBI:29101"/>
    </ligand>
</feature>
<feature type="binding site" evidence="1">
    <location>
        <position position="605"/>
    </location>
    <ligand>
        <name>substrate</name>
    </ligand>
</feature>
<feature type="binding site" evidence="1">
    <location>
        <position position="1000"/>
    </location>
    <ligand>
        <name>substrate</name>
    </ligand>
</feature>
<feature type="site" description="Transition state stabilizer" evidence="1">
    <location>
        <position position="358"/>
    </location>
</feature>
<feature type="site" description="Transition state stabilizer" evidence="1">
    <location>
        <position position="392"/>
    </location>
</feature>
<proteinExistence type="inferred from homology"/>
<name>BGAL_ECO27</name>
<dbReference type="EC" id="3.2.1.23" evidence="1"/>
<dbReference type="EMBL" id="FM180568">
    <property type="protein sequence ID" value="CAS07847.1"/>
    <property type="molecule type" value="Genomic_DNA"/>
</dbReference>
<dbReference type="RefSeq" id="WP_000177864.1">
    <property type="nucleotide sequence ID" value="NC_011601.1"/>
</dbReference>
<dbReference type="SMR" id="B7UJI9"/>
<dbReference type="CAZy" id="GH2">
    <property type="family name" value="Glycoside Hydrolase Family 2"/>
</dbReference>
<dbReference type="KEGG" id="ecg:E2348C_0299"/>
<dbReference type="HOGENOM" id="CLU_002346_0_2_6"/>
<dbReference type="Proteomes" id="UP000008205">
    <property type="component" value="Chromosome"/>
</dbReference>
<dbReference type="GO" id="GO:0009341">
    <property type="term" value="C:beta-galactosidase complex"/>
    <property type="evidence" value="ECO:0007669"/>
    <property type="project" value="InterPro"/>
</dbReference>
<dbReference type="GO" id="GO:0004565">
    <property type="term" value="F:beta-galactosidase activity"/>
    <property type="evidence" value="ECO:0007669"/>
    <property type="project" value="UniProtKB-EC"/>
</dbReference>
<dbReference type="GO" id="GO:0030246">
    <property type="term" value="F:carbohydrate binding"/>
    <property type="evidence" value="ECO:0007669"/>
    <property type="project" value="InterPro"/>
</dbReference>
<dbReference type="GO" id="GO:0000287">
    <property type="term" value="F:magnesium ion binding"/>
    <property type="evidence" value="ECO:0007669"/>
    <property type="project" value="UniProtKB-UniRule"/>
</dbReference>
<dbReference type="GO" id="GO:0005990">
    <property type="term" value="P:lactose catabolic process"/>
    <property type="evidence" value="ECO:0007669"/>
    <property type="project" value="TreeGrafter"/>
</dbReference>
<dbReference type="FunFam" id="2.60.120.260:FF:000058">
    <property type="entry name" value="Beta-galactosidase"/>
    <property type="match status" value="1"/>
</dbReference>
<dbReference type="FunFam" id="2.60.40.10:FF:000680">
    <property type="entry name" value="Beta-galactosidase"/>
    <property type="match status" value="1"/>
</dbReference>
<dbReference type="FunFam" id="2.60.40.10:FF:000850">
    <property type="entry name" value="Beta-galactosidase"/>
    <property type="match status" value="1"/>
</dbReference>
<dbReference type="FunFam" id="2.70.98.10:FF:000006">
    <property type="entry name" value="Beta-galactosidase"/>
    <property type="match status" value="1"/>
</dbReference>
<dbReference type="FunFam" id="3.20.20.80:FF:000018">
    <property type="entry name" value="Beta-galactosidase"/>
    <property type="match status" value="1"/>
</dbReference>
<dbReference type="Gene3D" id="2.70.98.10">
    <property type="match status" value="1"/>
</dbReference>
<dbReference type="Gene3D" id="2.60.120.260">
    <property type="entry name" value="Galactose-binding domain-like"/>
    <property type="match status" value="1"/>
</dbReference>
<dbReference type="Gene3D" id="3.20.20.80">
    <property type="entry name" value="Glycosidases"/>
    <property type="match status" value="1"/>
</dbReference>
<dbReference type="Gene3D" id="2.60.40.10">
    <property type="entry name" value="Immunoglobulins"/>
    <property type="match status" value="2"/>
</dbReference>
<dbReference type="HAMAP" id="MF_01687">
    <property type="entry name" value="Beta_gal"/>
    <property type="match status" value="1"/>
</dbReference>
<dbReference type="InterPro" id="IPR004199">
    <property type="entry name" value="B-gal_small/dom_5"/>
</dbReference>
<dbReference type="InterPro" id="IPR050347">
    <property type="entry name" value="Bact_Beta-galactosidase"/>
</dbReference>
<dbReference type="InterPro" id="IPR036156">
    <property type="entry name" value="Beta-gal/glucu_dom_sf"/>
</dbReference>
<dbReference type="InterPro" id="IPR011013">
    <property type="entry name" value="Gal_mutarotase_sf_dom"/>
</dbReference>
<dbReference type="InterPro" id="IPR008979">
    <property type="entry name" value="Galactose-bd-like_sf"/>
</dbReference>
<dbReference type="InterPro" id="IPR014718">
    <property type="entry name" value="GH-type_carb-bd"/>
</dbReference>
<dbReference type="InterPro" id="IPR006101">
    <property type="entry name" value="Glyco_hydro_2"/>
</dbReference>
<dbReference type="InterPro" id="IPR023232">
    <property type="entry name" value="Glyco_hydro_2_AS"/>
</dbReference>
<dbReference type="InterPro" id="IPR023933">
    <property type="entry name" value="Glyco_hydro_2_beta_Galsidase"/>
</dbReference>
<dbReference type="InterPro" id="IPR006103">
    <property type="entry name" value="Glyco_hydro_2_cat"/>
</dbReference>
<dbReference type="InterPro" id="IPR023230">
    <property type="entry name" value="Glyco_hydro_2_CS"/>
</dbReference>
<dbReference type="InterPro" id="IPR006102">
    <property type="entry name" value="Glyco_hydro_2_Ig-like"/>
</dbReference>
<dbReference type="InterPro" id="IPR006104">
    <property type="entry name" value="Glyco_hydro_2_N"/>
</dbReference>
<dbReference type="InterPro" id="IPR017853">
    <property type="entry name" value="Glycoside_hydrolase_SF"/>
</dbReference>
<dbReference type="InterPro" id="IPR013783">
    <property type="entry name" value="Ig-like_fold"/>
</dbReference>
<dbReference type="InterPro" id="IPR032312">
    <property type="entry name" value="LacZ_4"/>
</dbReference>
<dbReference type="NCBIfam" id="NF007074">
    <property type="entry name" value="PRK09525.1"/>
    <property type="match status" value="1"/>
</dbReference>
<dbReference type="PANTHER" id="PTHR46323">
    <property type="entry name" value="BETA-GALACTOSIDASE"/>
    <property type="match status" value="1"/>
</dbReference>
<dbReference type="PANTHER" id="PTHR46323:SF2">
    <property type="entry name" value="BETA-GALACTOSIDASE"/>
    <property type="match status" value="1"/>
</dbReference>
<dbReference type="Pfam" id="PF02929">
    <property type="entry name" value="Bgal_small_N"/>
    <property type="match status" value="1"/>
</dbReference>
<dbReference type="Pfam" id="PF00703">
    <property type="entry name" value="Glyco_hydro_2"/>
    <property type="match status" value="1"/>
</dbReference>
<dbReference type="Pfam" id="PF02836">
    <property type="entry name" value="Glyco_hydro_2_C"/>
    <property type="match status" value="1"/>
</dbReference>
<dbReference type="Pfam" id="PF02837">
    <property type="entry name" value="Glyco_hydro_2_N"/>
    <property type="match status" value="1"/>
</dbReference>
<dbReference type="Pfam" id="PF16353">
    <property type="entry name" value="LacZ_4"/>
    <property type="match status" value="1"/>
</dbReference>
<dbReference type="PRINTS" id="PR00132">
    <property type="entry name" value="GLHYDRLASE2"/>
</dbReference>
<dbReference type="SMART" id="SM01038">
    <property type="entry name" value="Bgal_small_N"/>
    <property type="match status" value="1"/>
</dbReference>
<dbReference type="SUPFAM" id="SSF51445">
    <property type="entry name" value="(Trans)glycosidases"/>
    <property type="match status" value="1"/>
</dbReference>
<dbReference type="SUPFAM" id="SSF49303">
    <property type="entry name" value="beta-Galactosidase/glucuronidase domain"/>
    <property type="match status" value="2"/>
</dbReference>
<dbReference type="SUPFAM" id="SSF74650">
    <property type="entry name" value="Galactose mutarotase-like"/>
    <property type="match status" value="1"/>
</dbReference>
<dbReference type="SUPFAM" id="SSF49785">
    <property type="entry name" value="Galactose-binding domain-like"/>
    <property type="match status" value="1"/>
</dbReference>
<dbReference type="PROSITE" id="PS00719">
    <property type="entry name" value="GLYCOSYL_HYDROL_F2_1"/>
    <property type="match status" value="1"/>
</dbReference>
<dbReference type="PROSITE" id="PS00608">
    <property type="entry name" value="GLYCOSYL_HYDROL_F2_2"/>
    <property type="match status" value="1"/>
</dbReference>
<protein>
    <recommendedName>
        <fullName evidence="1">Beta-galactosidase</fullName>
        <shortName evidence="1">Beta-gal</shortName>
        <ecNumber evidence="1">3.2.1.23</ecNumber>
    </recommendedName>
    <alternativeName>
        <fullName evidence="1">Lactase</fullName>
    </alternativeName>
</protein>
<comment type="catalytic activity">
    <reaction evidence="1">
        <text>Hydrolysis of terminal non-reducing beta-D-galactose residues in beta-D-galactosides.</text>
        <dbReference type="EC" id="3.2.1.23"/>
    </reaction>
</comment>
<comment type="cofactor">
    <cofactor evidence="1">
        <name>Mg(2+)</name>
        <dbReference type="ChEBI" id="CHEBI:18420"/>
    </cofactor>
    <text evidence="1">Binds 2 magnesium ions per monomer.</text>
</comment>
<comment type="cofactor">
    <cofactor evidence="1">
        <name>Na(+)</name>
        <dbReference type="ChEBI" id="CHEBI:29101"/>
    </cofactor>
    <text evidence="1">Binds 1 sodium ion per monomer.</text>
</comment>
<comment type="subunit">
    <text evidence="1">Homotetramer.</text>
</comment>
<comment type="similarity">
    <text evidence="1">Belongs to the glycosyl hydrolase 2 family.</text>
</comment>